<comment type="function">
    <text evidence="1">Catalyzes the methylation of C-1 in cobalt-precorrin-5B to form cobalt-precorrin-6A.</text>
</comment>
<comment type="catalytic activity">
    <reaction evidence="1">
        <text>Co-precorrin-5B + S-adenosyl-L-methionine = Co-precorrin-6A + S-adenosyl-L-homocysteine</text>
        <dbReference type="Rhea" id="RHEA:26285"/>
        <dbReference type="ChEBI" id="CHEBI:57856"/>
        <dbReference type="ChEBI" id="CHEBI:59789"/>
        <dbReference type="ChEBI" id="CHEBI:60063"/>
        <dbReference type="ChEBI" id="CHEBI:60064"/>
        <dbReference type="EC" id="2.1.1.195"/>
    </reaction>
</comment>
<comment type="pathway">
    <text evidence="1">Cofactor biosynthesis; adenosylcobalamin biosynthesis; cob(II)yrinate a,c-diamide from sirohydrochlorin (anaerobic route): step 6/10.</text>
</comment>
<comment type="similarity">
    <text evidence="1">Belongs to the CbiD family.</text>
</comment>
<gene>
    <name evidence="1" type="primary">cbiD</name>
    <name type="ordered locus">PTO0110</name>
</gene>
<proteinExistence type="inferred from homology"/>
<feature type="chain" id="PRO_0000257788" description="Cobalt-precorrin-5B C(1)-methyltransferase">
    <location>
        <begin position="1"/>
        <end position="341"/>
    </location>
</feature>
<keyword id="KW-0169">Cobalamin biosynthesis</keyword>
<keyword id="KW-0489">Methyltransferase</keyword>
<keyword id="KW-0949">S-adenosyl-L-methionine</keyword>
<keyword id="KW-0808">Transferase</keyword>
<sequence length="341" mass="36506">MPRYGYTTGTCATAATRAAIIALATGRKLKSVEVKLPSKKNAIININDVEIKEDYAMASVVKDGGDDPDVTTGLVIYSKVSFTDSGIYVDGGEGIGRVTKEGLPVKPGNAAINPVPMRMIKNTAMETLSELNISSGLKIIISAPGGDKVALKTCNPKLGIIGGISILGTTGIVVPYSAASWRASIVLAMRVAIKSNYDTVILTTGSRTEEYARKLFNDRYPCIDVGDFIGFSIRRAAENGIKNIIIACMPGKASKLAMGMEDTSSRNSGVDFDFIYKMALSINIKNAEIIKNSNTVNALVDEFTDDGLFKLMAELAKINLRRISNINIDVIIFDMSGNVIS</sequence>
<organism>
    <name type="scientific">Picrophilus torridus (strain ATCC 700027 / DSM 9790 / JCM 10055 / NBRC 100828 / KAW 2/3)</name>
    <dbReference type="NCBI Taxonomy" id="1122961"/>
    <lineage>
        <taxon>Archaea</taxon>
        <taxon>Methanobacteriati</taxon>
        <taxon>Thermoplasmatota</taxon>
        <taxon>Thermoplasmata</taxon>
        <taxon>Thermoplasmatales</taxon>
        <taxon>Picrophilaceae</taxon>
        <taxon>Picrophilus</taxon>
    </lineage>
</organism>
<accession>Q3V8B2</accession>
<protein>
    <recommendedName>
        <fullName evidence="1">Cobalt-precorrin-5B C(1)-methyltransferase</fullName>
        <ecNumber evidence="1">2.1.1.195</ecNumber>
    </recommendedName>
    <alternativeName>
        <fullName evidence="1">Cobalt-precorrin-6A synthase</fullName>
    </alternativeName>
</protein>
<dbReference type="EC" id="2.1.1.195" evidence="1"/>
<dbReference type="EMBL" id="AE017261">
    <property type="protein sequence ID" value="AAT42695.1"/>
    <property type="molecule type" value="Genomic_DNA"/>
</dbReference>
<dbReference type="RefSeq" id="WP_011176911.1">
    <property type="nucleotide sequence ID" value="NC_005877.1"/>
</dbReference>
<dbReference type="SMR" id="Q3V8B2"/>
<dbReference type="FunCoup" id="Q3V8B2">
    <property type="interactions" value="60"/>
</dbReference>
<dbReference type="STRING" id="263820.PTO0110"/>
<dbReference type="PaxDb" id="263820-PTO0110"/>
<dbReference type="GeneID" id="2844474"/>
<dbReference type="KEGG" id="pto:PTO0110"/>
<dbReference type="PATRIC" id="fig|263820.9.peg.124"/>
<dbReference type="eggNOG" id="arCOG04383">
    <property type="taxonomic scope" value="Archaea"/>
</dbReference>
<dbReference type="HOGENOM" id="CLU_041273_0_0_2"/>
<dbReference type="InParanoid" id="Q3V8B2"/>
<dbReference type="OrthoDB" id="57543at2157"/>
<dbReference type="UniPathway" id="UPA00148">
    <property type="reaction ID" value="UER00227"/>
</dbReference>
<dbReference type="Proteomes" id="UP000000438">
    <property type="component" value="Chromosome"/>
</dbReference>
<dbReference type="GO" id="GO:0043780">
    <property type="term" value="F:cobalt-precorrin-5B C1-methyltransferase activity"/>
    <property type="evidence" value="ECO:0007669"/>
    <property type="project" value="RHEA"/>
</dbReference>
<dbReference type="GO" id="GO:0019251">
    <property type="term" value="P:anaerobic cobalamin biosynthetic process"/>
    <property type="evidence" value="ECO:0007669"/>
    <property type="project" value="UniProtKB-UniRule"/>
</dbReference>
<dbReference type="GO" id="GO:0032259">
    <property type="term" value="P:methylation"/>
    <property type="evidence" value="ECO:0007669"/>
    <property type="project" value="UniProtKB-KW"/>
</dbReference>
<dbReference type="Gene3D" id="3.30.2110.10">
    <property type="entry name" value="CbiD-like"/>
    <property type="match status" value="1"/>
</dbReference>
<dbReference type="Gene3D" id="3.40.50.10720">
    <property type="entry name" value="CbiD-like domains"/>
    <property type="match status" value="1"/>
</dbReference>
<dbReference type="HAMAP" id="MF_00787">
    <property type="entry name" value="CbiD"/>
    <property type="match status" value="1"/>
</dbReference>
<dbReference type="InterPro" id="IPR002748">
    <property type="entry name" value="CbiD"/>
</dbReference>
<dbReference type="InterPro" id="IPR036074">
    <property type="entry name" value="CbiD_sf"/>
</dbReference>
<dbReference type="NCBIfam" id="TIGR00312">
    <property type="entry name" value="cbiD"/>
    <property type="match status" value="1"/>
</dbReference>
<dbReference type="PANTHER" id="PTHR35863">
    <property type="entry name" value="COBALT-PRECORRIN-5B C(1)-METHYLTRANSFERASE"/>
    <property type="match status" value="1"/>
</dbReference>
<dbReference type="PANTHER" id="PTHR35863:SF1">
    <property type="entry name" value="COBALT-PRECORRIN-5B C(1)-METHYLTRANSFERASE"/>
    <property type="match status" value="1"/>
</dbReference>
<dbReference type="Pfam" id="PF01888">
    <property type="entry name" value="CbiD"/>
    <property type="match status" value="1"/>
</dbReference>
<dbReference type="PIRSF" id="PIRSF026782">
    <property type="entry name" value="CbiD"/>
    <property type="match status" value="1"/>
</dbReference>
<dbReference type="SUPFAM" id="SSF111342">
    <property type="entry name" value="CbiD-like"/>
    <property type="match status" value="1"/>
</dbReference>
<evidence type="ECO:0000255" key="1">
    <source>
        <dbReference type="HAMAP-Rule" id="MF_00787"/>
    </source>
</evidence>
<name>CBID_PICTO</name>
<reference key="1">
    <citation type="journal article" date="2004" name="Proc. Natl. Acad. Sci. U.S.A.">
        <title>Genome sequence of Picrophilus torridus and its implications for life around pH 0.</title>
        <authorList>
            <person name="Fuetterer O."/>
            <person name="Angelov A."/>
            <person name="Liesegang H."/>
            <person name="Gottschalk G."/>
            <person name="Schleper C."/>
            <person name="Schepers B."/>
            <person name="Dock C."/>
            <person name="Antranikian G."/>
            <person name="Liebl W."/>
        </authorList>
    </citation>
    <scope>NUCLEOTIDE SEQUENCE [LARGE SCALE GENOMIC DNA]</scope>
    <source>
        <strain>ATCC 700027 / DSM 9790 / JCM 10055 / NBRC 100828 / KAW 2/3</strain>
    </source>
</reference>